<dbReference type="EC" id="6.1.1.7" evidence="1"/>
<dbReference type="EMBL" id="AE000666">
    <property type="protein sequence ID" value="AAB86155.1"/>
    <property type="molecule type" value="Genomic_DNA"/>
</dbReference>
<dbReference type="PIR" id="A69092">
    <property type="entry name" value="A69092"/>
</dbReference>
<dbReference type="RefSeq" id="WP_010877290.1">
    <property type="nucleotide sequence ID" value="NC_000916.1"/>
</dbReference>
<dbReference type="SMR" id="O27718"/>
<dbReference type="FunCoup" id="O27718">
    <property type="interactions" value="184"/>
</dbReference>
<dbReference type="STRING" id="187420.MTH_1683"/>
<dbReference type="PaxDb" id="187420-MTH_1683"/>
<dbReference type="EnsemblBacteria" id="AAB86155">
    <property type="protein sequence ID" value="AAB86155"/>
    <property type="gene ID" value="MTH_1683"/>
</dbReference>
<dbReference type="GeneID" id="1470768"/>
<dbReference type="GeneID" id="77402201"/>
<dbReference type="KEGG" id="mth:MTH_1683"/>
<dbReference type="PATRIC" id="fig|187420.15.peg.1643"/>
<dbReference type="HOGENOM" id="CLU_004485_4_0_2"/>
<dbReference type="InParanoid" id="O27718"/>
<dbReference type="Proteomes" id="UP000005223">
    <property type="component" value="Chromosome"/>
</dbReference>
<dbReference type="GO" id="GO:0005737">
    <property type="term" value="C:cytoplasm"/>
    <property type="evidence" value="ECO:0007669"/>
    <property type="project" value="UniProtKB-SubCell"/>
</dbReference>
<dbReference type="GO" id="GO:0004813">
    <property type="term" value="F:alanine-tRNA ligase activity"/>
    <property type="evidence" value="ECO:0007669"/>
    <property type="project" value="UniProtKB-UniRule"/>
</dbReference>
<dbReference type="GO" id="GO:0002161">
    <property type="term" value="F:aminoacyl-tRNA deacylase activity"/>
    <property type="evidence" value="ECO:0007669"/>
    <property type="project" value="UniProtKB-ARBA"/>
</dbReference>
<dbReference type="GO" id="GO:0005524">
    <property type="term" value="F:ATP binding"/>
    <property type="evidence" value="ECO:0007669"/>
    <property type="project" value="UniProtKB-UniRule"/>
</dbReference>
<dbReference type="GO" id="GO:0000049">
    <property type="term" value="F:tRNA binding"/>
    <property type="evidence" value="ECO:0007669"/>
    <property type="project" value="UniProtKB-KW"/>
</dbReference>
<dbReference type="GO" id="GO:0008270">
    <property type="term" value="F:zinc ion binding"/>
    <property type="evidence" value="ECO:0007669"/>
    <property type="project" value="UniProtKB-UniRule"/>
</dbReference>
<dbReference type="GO" id="GO:0006419">
    <property type="term" value="P:alanyl-tRNA aminoacylation"/>
    <property type="evidence" value="ECO:0007669"/>
    <property type="project" value="UniProtKB-UniRule"/>
</dbReference>
<dbReference type="FunFam" id="3.10.310.40:FF:000001">
    <property type="entry name" value="Alanine--tRNA ligase"/>
    <property type="match status" value="1"/>
</dbReference>
<dbReference type="FunFam" id="3.30.54.20:FF:000004">
    <property type="entry name" value="Alanine--tRNA ligase"/>
    <property type="match status" value="1"/>
</dbReference>
<dbReference type="FunFam" id="3.30.980.10:FF:000004">
    <property type="entry name" value="Alanine--tRNA ligase, cytoplasmic"/>
    <property type="match status" value="1"/>
</dbReference>
<dbReference type="Gene3D" id="2.40.30.130">
    <property type="match status" value="1"/>
</dbReference>
<dbReference type="Gene3D" id="3.10.310.40">
    <property type="match status" value="1"/>
</dbReference>
<dbReference type="Gene3D" id="3.30.54.20">
    <property type="match status" value="1"/>
</dbReference>
<dbReference type="Gene3D" id="6.10.250.550">
    <property type="match status" value="1"/>
</dbReference>
<dbReference type="Gene3D" id="3.30.930.10">
    <property type="entry name" value="Bira Bifunctional Protein, Domain 2"/>
    <property type="match status" value="1"/>
</dbReference>
<dbReference type="Gene3D" id="3.30.980.10">
    <property type="entry name" value="Threonyl-trna Synthetase, Chain A, domain 2"/>
    <property type="match status" value="1"/>
</dbReference>
<dbReference type="HAMAP" id="MF_00036_A">
    <property type="entry name" value="Ala_tRNA_synth_A"/>
    <property type="match status" value="1"/>
</dbReference>
<dbReference type="InterPro" id="IPR045864">
    <property type="entry name" value="aa-tRNA-synth_II/BPL/LPL"/>
</dbReference>
<dbReference type="InterPro" id="IPR002318">
    <property type="entry name" value="Ala-tRNA-lgiase_IIc"/>
</dbReference>
<dbReference type="InterPro" id="IPR018162">
    <property type="entry name" value="Ala-tRNA-ligase_IIc_anticod-bd"/>
</dbReference>
<dbReference type="InterPro" id="IPR018165">
    <property type="entry name" value="Ala-tRNA-synth_IIc_core"/>
</dbReference>
<dbReference type="InterPro" id="IPR018164">
    <property type="entry name" value="Ala-tRNA-synth_IIc_N"/>
</dbReference>
<dbReference type="InterPro" id="IPR022429">
    <property type="entry name" value="Ala-tRNA_lgiase_arc"/>
</dbReference>
<dbReference type="InterPro" id="IPR050058">
    <property type="entry name" value="Ala-tRNA_ligase"/>
</dbReference>
<dbReference type="InterPro" id="IPR003156">
    <property type="entry name" value="DHHA1_dom"/>
</dbReference>
<dbReference type="InterPro" id="IPR018163">
    <property type="entry name" value="Thr/Ala-tRNA-synth_IIc_edit"/>
</dbReference>
<dbReference type="InterPro" id="IPR009000">
    <property type="entry name" value="Transl_B-barrel_sf"/>
</dbReference>
<dbReference type="InterPro" id="IPR012947">
    <property type="entry name" value="tRNA_SAD"/>
</dbReference>
<dbReference type="NCBIfam" id="TIGR03683">
    <property type="entry name" value="A-tRNA_syn_arch"/>
    <property type="match status" value="1"/>
</dbReference>
<dbReference type="NCBIfam" id="TIGR00344">
    <property type="entry name" value="alaS"/>
    <property type="match status" value="1"/>
</dbReference>
<dbReference type="PANTHER" id="PTHR11777:SF9">
    <property type="entry name" value="ALANINE--TRNA LIGASE, CYTOPLASMIC"/>
    <property type="match status" value="1"/>
</dbReference>
<dbReference type="PANTHER" id="PTHR11777">
    <property type="entry name" value="ALANYL-TRNA SYNTHETASE"/>
    <property type="match status" value="1"/>
</dbReference>
<dbReference type="Pfam" id="PF02272">
    <property type="entry name" value="DHHA1"/>
    <property type="match status" value="1"/>
</dbReference>
<dbReference type="Pfam" id="PF01411">
    <property type="entry name" value="tRNA-synt_2c"/>
    <property type="match status" value="1"/>
</dbReference>
<dbReference type="Pfam" id="PF07973">
    <property type="entry name" value="tRNA_SAD"/>
    <property type="match status" value="1"/>
</dbReference>
<dbReference type="PRINTS" id="PR00980">
    <property type="entry name" value="TRNASYNTHALA"/>
</dbReference>
<dbReference type="SMART" id="SM00863">
    <property type="entry name" value="tRNA_SAD"/>
    <property type="match status" value="1"/>
</dbReference>
<dbReference type="SUPFAM" id="SSF55681">
    <property type="entry name" value="Class II aaRS and biotin synthetases"/>
    <property type="match status" value="1"/>
</dbReference>
<dbReference type="SUPFAM" id="SSF101353">
    <property type="entry name" value="Putative anticodon-binding domain of alanyl-tRNA synthetase (AlaRS)"/>
    <property type="match status" value="1"/>
</dbReference>
<dbReference type="SUPFAM" id="SSF55186">
    <property type="entry name" value="ThrRS/AlaRS common domain"/>
    <property type="match status" value="1"/>
</dbReference>
<dbReference type="SUPFAM" id="SSF50447">
    <property type="entry name" value="Translation proteins"/>
    <property type="match status" value="1"/>
</dbReference>
<dbReference type="PROSITE" id="PS50860">
    <property type="entry name" value="AA_TRNA_LIGASE_II_ALA"/>
    <property type="match status" value="1"/>
</dbReference>
<organism>
    <name type="scientific">Methanothermobacter thermautotrophicus (strain ATCC 29096 / DSM 1053 / JCM 10044 / NBRC 100330 / Delta H)</name>
    <name type="common">Methanobacterium thermoautotrophicum</name>
    <dbReference type="NCBI Taxonomy" id="187420"/>
    <lineage>
        <taxon>Archaea</taxon>
        <taxon>Methanobacteriati</taxon>
        <taxon>Methanobacteriota</taxon>
        <taxon>Methanomada group</taxon>
        <taxon>Methanobacteria</taxon>
        <taxon>Methanobacteriales</taxon>
        <taxon>Methanobacteriaceae</taxon>
        <taxon>Methanothermobacter</taxon>
    </lineage>
</organism>
<accession>O27718</accession>
<reference key="1">
    <citation type="journal article" date="1997" name="J. Bacteriol.">
        <title>Complete genome sequence of Methanobacterium thermoautotrophicum deltaH: functional analysis and comparative genomics.</title>
        <authorList>
            <person name="Smith D.R."/>
            <person name="Doucette-Stamm L.A."/>
            <person name="Deloughery C."/>
            <person name="Lee H.-M."/>
            <person name="Dubois J."/>
            <person name="Aldredge T."/>
            <person name="Bashirzadeh R."/>
            <person name="Blakely D."/>
            <person name="Cook R."/>
            <person name="Gilbert K."/>
            <person name="Harrison D."/>
            <person name="Hoang L."/>
            <person name="Keagle P."/>
            <person name="Lumm W."/>
            <person name="Pothier B."/>
            <person name="Qiu D."/>
            <person name="Spadafora R."/>
            <person name="Vicare R."/>
            <person name="Wang Y."/>
            <person name="Wierzbowski J."/>
            <person name="Gibson R."/>
            <person name="Jiwani N."/>
            <person name="Caruso A."/>
            <person name="Bush D."/>
            <person name="Safer H."/>
            <person name="Patwell D."/>
            <person name="Prabhakar S."/>
            <person name="McDougall S."/>
            <person name="Shimer G."/>
            <person name="Goyal A."/>
            <person name="Pietrovski S."/>
            <person name="Church G.M."/>
            <person name="Daniels C.J."/>
            <person name="Mao J.-I."/>
            <person name="Rice P."/>
            <person name="Noelling J."/>
            <person name="Reeve J.N."/>
        </authorList>
    </citation>
    <scope>NUCLEOTIDE SEQUENCE [LARGE SCALE GENOMIC DNA]</scope>
    <source>
        <strain>ATCC 29096 / DSM 1053 / JCM 10044 / NBRC 100330 / Delta H</strain>
    </source>
</reference>
<keyword id="KW-0030">Aminoacyl-tRNA synthetase</keyword>
<keyword id="KW-0067">ATP-binding</keyword>
<keyword id="KW-0963">Cytoplasm</keyword>
<keyword id="KW-0436">Ligase</keyword>
<keyword id="KW-0479">Metal-binding</keyword>
<keyword id="KW-0547">Nucleotide-binding</keyword>
<keyword id="KW-0648">Protein biosynthesis</keyword>
<keyword id="KW-1185">Reference proteome</keyword>
<keyword id="KW-0694">RNA-binding</keyword>
<keyword id="KW-0820">tRNA-binding</keyword>
<keyword id="KW-0862">Zinc</keyword>
<name>SYA_METTH</name>
<feature type="chain" id="PRO_0000075268" description="Alanine--tRNA ligase">
    <location>
        <begin position="1"/>
        <end position="898"/>
    </location>
</feature>
<feature type="binding site" evidence="1">
    <location>
        <position position="589"/>
    </location>
    <ligand>
        <name>Zn(2+)</name>
        <dbReference type="ChEBI" id="CHEBI:29105"/>
    </ligand>
</feature>
<feature type="binding site" evidence="1">
    <location>
        <position position="593"/>
    </location>
    <ligand>
        <name>Zn(2+)</name>
        <dbReference type="ChEBI" id="CHEBI:29105"/>
    </ligand>
</feature>
<feature type="binding site" evidence="1">
    <location>
        <position position="693"/>
    </location>
    <ligand>
        <name>Zn(2+)</name>
        <dbReference type="ChEBI" id="CHEBI:29105"/>
    </ligand>
</feature>
<feature type="binding site" evidence="1">
    <location>
        <position position="697"/>
    </location>
    <ligand>
        <name>Zn(2+)</name>
        <dbReference type="ChEBI" id="CHEBI:29105"/>
    </ligand>
</feature>
<proteinExistence type="inferred from homology"/>
<gene>
    <name evidence="1" type="primary">alaS</name>
    <name type="ordered locus">MTH_1683</name>
</gene>
<comment type="function">
    <text evidence="1">Catalyzes the attachment of alanine to tRNA(Ala) in a two-step reaction: alanine is first activated by ATP to form Ala-AMP and then transferred to the acceptor end of tRNA(Ala). Also edits incorrectly charged Ser-tRNA(Ala) and Gly-tRNA(Ala) via its editing domain.</text>
</comment>
<comment type="catalytic activity">
    <reaction evidence="1">
        <text>tRNA(Ala) + L-alanine + ATP = L-alanyl-tRNA(Ala) + AMP + diphosphate</text>
        <dbReference type="Rhea" id="RHEA:12540"/>
        <dbReference type="Rhea" id="RHEA-COMP:9657"/>
        <dbReference type="Rhea" id="RHEA-COMP:9923"/>
        <dbReference type="ChEBI" id="CHEBI:30616"/>
        <dbReference type="ChEBI" id="CHEBI:33019"/>
        <dbReference type="ChEBI" id="CHEBI:57972"/>
        <dbReference type="ChEBI" id="CHEBI:78442"/>
        <dbReference type="ChEBI" id="CHEBI:78497"/>
        <dbReference type="ChEBI" id="CHEBI:456215"/>
        <dbReference type="EC" id="6.1.1.7"/>
    </reaction>
</comment>
<comment type="cofactor">
    <cofactor evidence="1">
        <name>Zn(2+)</name>
        <dbReference type="ChEBI" id="CHEBI:29105"/>
    </cofactor>
    <text evidence="1">Binds 1 zinc ion per subunit.</text>
</comment>
<comment type="subcellular location">
    <subcellularLocation>
        <location evidence="1">Cytoplasm</location>
    </subcellularLocation>
</comment>
<comment type="domain">
    <text evidence="1">Consists of three domains; the N-terminal catalytic domain, the editing domain and the C-terminal C-Ala domain. The editing domain removes incorrectly charged amino acids, while the C-Ala domain, along with tRNA(Ala), serves as a bridge to cooperatively bring together the editing and aminoacylation centers thus stimulating deacylation of misacylated tRNAs.</text>
</comment>
<comment type="similarity">
    <text evidence="1">Belongs to the class-II aminoacyl-tRNA synthetase family.</text>
</comment>
<protein>
    <recommendedName>
        <fullName evidence="1">Alanine--tRNA ligase</fullName>
        <ecNumber evidence="1">6.1.1.7</ecNumber>
    </recommendedName>
    <alternativeName>
        <fullName evidence="1">Alanyl-tRNA synthetase</fullName>
        <shortName evidence="1">AlaRS</shortName>
    </alternativeName>
</protein>
<sequence>MITMSHQLEKLGYRKYECRSCGNTFWSMKERATCGDAPCDEYGFIGNPATDRSYDLYEIQDKFMEFFAERGHEPIRRYPVLAKRWRDDVFLVGASIYNFQPWVTSGLVKPPANPLVVAQPSIRLNDVDNVGRTGRHLTCFTMGGHHAFNSEDNTVYWEEETIKYCHDFLTHIGIDPSEITFIESWWQGGGNEGPCYEVCVRGVELATLVFIQYRTLPDGGREEIPLKIVDTGYGLERFAWISQGTPTAYDACLGPVIEKLVELTGVKIDEEILAENAQVAGMMDIETYADLRELRKRVADKLGISVEELERAAAPMESVYAIADHTRCLAFMLADGVIPSNVKEGYLARLIIRRTLRLMKDLGMKESLKDIMNIQVEFLEGHYPEIRSHHEHILNIIDLEEHRYARTVKRGRRIVEKTIKYLKRDGKAEMPLEILIKLYDSHGIPPETIGEIAEESGFQVKIPDNFYTLVAERNETETEMPEEDVHLDYPATELLFYDEPDDLEFQAEVIGIHENGLILDRTLFYPEGGGQPSDTGYITAEGCRLRIKHAEKIGAVVVHRTDDEICIEPGTTIRGFIDSDRRLQLTRNHTATHLIVSAARKVLGDHIWQAGAQKGVKSSRLDLSHYRRITLEELQEIERLANEYVMMNVPLKVRWMDRDLAERKYGFILYQGGVVPGSRIRVVEIPGVDVQACAGTHVHRTGDIGLIRINRTERIQDGVERIEFSAGSAAIEIMQKTGDILRESSDIFKVTPSQLPGTCERFFTEWKALRNEVSRLKEKVASLKILEMKDRAERINDLTVIIDTVDADMDEMKNMALELSATVDAVVLANPEGKIVGAASEDAVKAGLRINEVISQAAAVLGGGGGGRPHLAQGAGPATDKVDEALEEARAALSTVRN</sequence>
<evidence type="ECO:0000255" key="1">
    <source>
        <dbReference type="HAMAP-Rule" id="MF_00036"/>
    </source>
</evidence>